<evidence type="ECO:0000250" key="1"/>
<evidence type="ECO:0000255" key="2"/>
<evidence type="ECO:0000256" key="3">
    <source>
        <dbReference type="SAM" id="MobiDB-lite"/>
    </source>
</evidence>
<evidence type="ECO:0000269" key="4">
    <source>
    </source>
</evidence>
<evidence type="ECO:0000305" key="5"/>
<organism>
    <name type="scientific">Felis catus</name>
    <name type="common">Cat</name>
    <name type="synonym">Felis silvestris catus</name>
    <dbReference type="NCBI Taxonomy" id="9685"/>
    <lineage>
        <taxon>Eukaryota</taxon>
        <taxon>Metazoa</taxon>
        <taxon>Chordata</taxon>
        <taxon>Craniata</taxon>
        <taxon>Vertebrata</taxon>
        <taxon>Euteleostomi</taxon>
        <taxon>Mammalia</taxon>
        <taxon>Eutheria</taxon>
        <taxon>Laurasiatheria</taxon>
        <taxon>Carnivora</taxon>
        <taxon>Feliformia</taxon>
        <taxon>Felidae</taxon>
        <taxon>Felinae</taxon>
        <taxon>Felis</taxon>
    </lineage>
</organism>
<name>TS1R3_FELCA</name>
<comment type="function">
    <text evidence="1">Putative taste receptor. TAS1R1/TAS1R3 responds to the umami taste stimulus (the taste of monosodium glutamate) (By similarity).</text>
</comment>
<comment type="subunit">
    <text>Forms homodimers or a heterodimer with TAS1R1.</text>
</comment>
<comment type="subcellular location">
    <subcellularLocation>
        <location>Cell membrane</location>
        <topology>Multi-pass membrane protein</topology>
    </subcellularLocation>
</comment>
<comment type="tissue specificity">
    <text evidence="4">Expressed in taste buds.</text>
</comment>
<comment type="miscellaneous">
    <text>Unlike most mammals domestic cats do not prefer and are unable to detect the sweetness of sugars. This is due to pseudogenization of the TAS1R2 gene which prevents the formation of the heterodimeric sweet taste receptor TAS1R2/TAS1R3. This molecular change was very likely an important event in the evolution of the cat's carnivorous behavior.</text>
</comment>
<comment type="similarity">
    <text evidence="5">Belongs to the G-protein coupled receptor 3 family. TAS1R subfamily.</text>
</comment>
<feature type="signal peptide" evidence="2">
    <location>
        <begin position="1"/>
        <end position="24"/>
    </location>
</feature>
<feature type="chain" id="PRO_0000240183" description="Taste receptor type 1 member 3">
    <location>
        <begin position="25"/>
        <end position="865"/>
    </location>
</feature>
<feature type="topological domain" description="Extracellular" evidence="2">
    <location>
        <begin position="25"/>
        <end position="573"/>
    </location>
</feature>
<feature type="transmembrane region" description="Helical; Name=1" evidence="2">
    <location>
        <begin position="574"/>
        <end position="594"/>
    </location>
</feature>
<feature type="topological domain" description="Cytoplasmic" evidence="2">
    <location>
        <begin position="595"/>
        <end position="606"/>
    </location>
</feature>
<feature type="transmembrane region" description="Helical; Name=2" evidence="2">
    <location>
        <begin position="607"/>
        <end position="627"/>
    </location>
</feature>
<feature type="topological domain" description="Extracellular" evidence="2">
    <location>
        <begin position="628"/>
        <end position="642"/>
    </location>
</feature>
<feature type="transmembrane region" description="Helical; Name=3" evidence="2">
    <location>
        <begin position="643"/>
        <end position="663"/>
    </location>
</feature>
<feature type="topological domain" description="Cytoplasmic" evidence="2">
    <location>
        <begin position="664"/>
        <end position="685"/>
    </location>
</feature>
<feature type="transmembrane region" description="Helical; Name=4" evidence="2">
    <location>
        <begin position="686"/>
        <end position="706"/>
    </location>
</feature>
<feature type="topological domain" description="Extracellular" evidence="2">
    <location>
        <begin position="707"/>
        <end position="732"/>
    </location>
</feature>
<feature type="transmembrane region" description="Helical; Name=5" evidence="2">
    <location>
        <begin position="733"/>
        <end position="753"/>
    </location>
</feature>
<feature type="topological domain" description="Cytoplasmic" evidence="2">
    <location>
        <begin position="754"/>
        <end position="765"/>
    </location>
</feature>
<feature type="transmembrane region" description="Helical; Name=6" evidence="2">
    <location>
        <begin position="766"/>
        <end position="786"/>
    </location>
</feature>
<feature type="topological domain" description="Extracellular" evidence="2">
    <location>
        <begin position="787"/>
        <end position="794"/>
    </location>
</feature>
<feature type="transmembrane region" description="Helical; Name=7" evidence="2">
    <location>
        <begin position="795"/>
        <end position="815"/>
    </location>
</feature>
<feature type="topological domain" description="Cytoplasmic" evidence="2">
    <location>
        <begin position="816"/>
        <end position="865"/>
    </location>
</feature>
<feature type="region of interest" description="Disordered" evidence="3">
    <location>
        <begin position="840"/>
        <end position="865"/>
    </location>
</feature>
<feature type="compositionally biased region" description="Polar residues" evidence="3">
    <location>
        <begin position="852"/>
        <end position="865"/>
    </location>
</feature>
<feature type="glycosylation site" description="N-linked (GlcNAc...) asparagine" evidence="2">
    <location>
        <position position="134"/>
    </location>
</feature>
<feature type="glycosylation site" description="N-linked (GlcNAc...) asparagine" evidence="2">
    <location>
        <position position="267"/>
    </location>
</feature>
<proteinExistence type="evidence at transcript level"/>
<keyword id="KW-1003">Cell membrane</keyword>
<keyword id="KW-0297">G-protein coupled receptor</keyword>
<keyword id="KW-0325">Glycoprotein</keyword>
<keyword id="KW-0472">Membrane</keyword>
<keyword id="KW-0675">Receptor</keyword>
<keyword id="KW-1185">Reference proteome</keyword>
<keyword id="KW-0732">Signal</keyword>
<keyword id="KW-0807">Transducer</keyword>
<keyword id="KW-0812">Transmembrane</keyword>
<keyword id="KW-1133">Transmembrane helix</keyword>
<sequence>MPGLALLGLTALLGLTALLDHGEGATSCLSQQLRMQGDYVLGGLFPLGSAEGTGLGDGLQPNATVCTRFSSLGLLWALAVKMAVEEINNGSALLPGLHLGYDLFDTCSEPMVAMKPSLVFMAKAGSCSIAAYCNYTQYQPRVLAVIGPHSSELALVTGKFFSFFLVPQVSYGASTDRLSNREIFPSFFRTVPSDQVQVAAMVELLEELGWNWVAAVGSDDEYGRQGLSLFSGLASARGICIAHEGLVPLPPGSLRLGALQGLLRQVNQSSVQVVVLFSSAHAARTLFSYSIRCKLSPKVWVASEAWLTSDLVMTLPGMPGVGTVLGFLQQGAPMPEFPSYVRTRLALAADPAFCASLDAEQPGLEEHVVGPRCPQCDHVTLENLSAGLLHHQTFAAYAAVYGVAQALHNTLRCNASGCPRREPVRPWQLLENMYNVSFRARGLALQFDASGNVNVDYDLKLWVWQDPTPELRTVGTFKGRLELWRSQMCWHTPGKQQPVSQCSRQCKEGQVRRVKGFHSCCYNCVDCKAGSYQRNPDDLLCTQCDQDQWSPDRSTRCFARKPMFLAWGEPAVLLLLALLALALGLALAALGLFLWHSDSPLVQASGGPRACFGLACLGLVCLSVLLFPGQPGPASCLAQQPLFHLPLTGCLSTFFLQAAEIFVGSELPPSWAEKMRGRLRGPWAWLVVLLAMLAEAALCAWYLVAFPPEVVTDWRVLPTEALVHCHVHSWISFGLVHATNAMLAFLCFLGTFLVQSRPGRYNGARGLTFAMLAYFITWISFVPLFANVHVAYQPAVQMGTILLCALGILATFHLPKCYLLLQRPELNTPEFFLEDNARAQGSSWGQGRGESGQKQVTPDPVTSPQ</sequence>
<reference key="1">
    <citation type="journal article" date="2005" name="PLoS Genet.">
        <title>Pseudogenization of a sweet-receptor gene accounts for cats' indifference toward sugar.</title>
        <authorList>
            <person name="Li X."/>
            <person name="Li W."/>
            <person name="Wang H."/>
            <person name="Cao J."/>
            <person name="Maehashi K."/>
            <person name="Hong L."/>
            <person name="Bachmanov A.A."/>
            <person name="Reed D.R."/>
            <person name="Legrand-Defretin V."/>
            <person name="Beauchamp G.K."/>
            <person name="Brand J.G."/>
        </authorList>
    </citation>
    <scope>NUCLEOTIDE SEQUENCE [MRNA]</scope>
    <scope>TISSUE SPECIFICITY</scope>
</reference>
<protein>
    <recommendedName>
        <fullName>Taste receptor type 1 member 3</fullName>
        <shortName>Taste receptor T1R3</shortName>
    </recommendedName>
</protein>
<accession>Q49KI5</accession>
<gene>
    <name type="primary">TAS1R3</name>
    <name type="synonym">T1R3</name>
</gene>
<dbReference type="EMBL" id="AY819786">
    <property type="protein sequence ID" value="AAX35814.1"/>
    <property type="molecule type" value="mRNA"/>
</dbReference>
<dbReference type="RefSeq" id="NP_001108019.1">
    <property type="nucleotide sequence ID" value="NM_001114547.1"/>
</dbReference>
<dbReference type="SMR" id="Q49KI5"/>
<dbReference type="FunCoup" id="Q49KI5">
    <property type="interactions" value="21"/>
</dbReference>
<dbReference type="STRING" id="9685.ENSFCAP00000007059"/>
<dbReference type="GlyCosmos" id="Q49KI5">
    <property type="glycosylation" value="2 sites, No reported glycans"/>
</dbReference>
<dbReference type="PaxDb" id="9685-ENSFCAP00000007059"/>
<dbReference type="GeneID" id="100136905"/>
<dbReference type="KEGG" id="fca:100136905"/>
<dbReference type="CTD" id="83756"/>
<dbReference type="eggNOG" id="KOG1056">
    <property type="taxonomic scope" value="Eukaryota"/>
</dbReference>
<dbReference type="InParanoid" id="Q49KI5"/>
<dbReference type="OrthoDB" id="5984008at2759"/>
<dbReference type="Proteomes" id="UP000011712">
    <property type="component" value="Unplaced"/>
</dbReference>
<dbReference type="GO" id="GO:0005886">
    <property type="term" value="C:plasma membrane"/>
    <property type="evidence" value="ECO:0000318"/>
    <property type="project" value="GO_Central"/>
</dbReference>
<dbReference type="GO" id="GO:0004930">
    <property type="term" value="F:G protein-coupled receptor activity"/>
    <property type="evidence" value="ECO:0000318"/>
    <property type="project" value="GO_Central"/>
</dbReference>
<dbReference type="GO" id="GO:0001582">
    <property type="term" value="P:detection of chemical stimulus involved in sensory perception of sweet taste"/>
    <property type="evidence" value="ECO:0007669"/>
    <property type="project" value="GOC"/>
</dbReference>
<dbReference type="GO" id="GO:0050916">
    <property type="term" value="P:sensory perception of sweet taste"/>
    <property type="evidence" value="ECO:0000318"/>
    <property type="project" value="GO_Central"/>
</dbReference>
<dbReference type="GO" id="GO:0050917">
    <property type="term" value="P:sensory perception of umami taste"/>
    <property type="evidence" value="ECO:0000318"/>
    <property type="project" value="GO_Central"/>
</dbReference>
<dbReference type="FunFam" id="3.40.50.2300:FF:000016">
    <property type="entry name" value="Taste 1 receptor member 2"/>
    <property type="match status" value="1"/>
</dbReference>
<dbReference type="FunFam" id="2.10.50.30:FF:000004">
    <property type="entry name" value="Taste receptor type 1 member 3-like protein"/>
    <property type="match status" value="1"/>
</dbReference>
<dbReference type="Gene3D" id="3.40.50.2300">
    <property type="match status" value="2"/>
</dbReference>
<dbReference type="Gene3D" id="2.10.50.30">
    <property type="entry name" value="GPCR, family 3, nine cysteines domain"/>
    <property type="match status" value="1"/>
</dbReference>
<dbReference type="InterPro" id="IPR001828">
    <property type="entry name" value="ANF_lig-bd_rcpt"/>
</dbReference>
<dbReference type="InterPro" id="IPR000337">
    <property type="entry name" value="GPCR_3"/>
</dbReference>
<dbReference type="InterPro" id="IPR011500">
    <property type="entry name" value="GPCR_3_9-Cys_dom"/>
</dbReference>
<dbReference type="InterPro" id="IPR038550">
    <property type="entry name" value="GPCR_3_9-Cys_sf"/>
</dbReference>
<dbReference type="InterPro" id="IPR017978">
    <property type="entry name" value="GPCR_3_C"/>
</dbReference>
<dbReference type="InterPro" id="IPR000068">
    <property type="entry name" value="GPCR_3_Ca_sens_rcpt-rel"/>
</dbReference>
<dbReference type="InterPro" id="IPR028082">
    <property type="entry name" value="Peripla_BP_I"/>
</dbReference>
<dbReference type="PANTHER" id="PTHR24061">
    <property type="entry name" value="CALCIUM-SENSING RECEPTOR-RELATED"/>
    <property type="match status" value="1"/>
</dbReference>
<dbReference type="PANTHER" id="PTHR24061:SF435">
    <property type="entry name" value="TASTE RECEPTOR TYPE 1 MEMBER 3"/>
    <property type="match status" value="1"/>
</dbReference>
<dbReference type="Pfam" id="PF00003">
    <property type="entry name" value="7tm_3"/>
    <property type="match status" value="1"/>
</dbReference>
<dbReference type="Pfam" id="PF01094">
    <property type="entry name" value="ANF_receptor"/>
    <property type="match status" value="1"/>
</dbReference>
<dbReference type="Pfam" id="PF07562">
    <property type="entry name" value="NCD3G"/>
    <property type="match status" value="1"/>
</dbReference>
<dbReference type="PRINTS" id="PR00592">
    <property type="entry name" value="CASENSINGR"/>
</dbReference>
<dbReference type="PRINTS" id="PR00248">
    <property type="entry name" value="GPCRMGR"/>
</dbReference>
<dbReference type="SUPFAM" id="SSF53822">
    <property type="entry name" value="Periplasmic binding protein-like I"/>
    <property type="match status" value="1"/>
</dbReference>
<dbReference type="PROSITE" id="PS50259">
    <property type="entry name" value="G_PROTEIN_RECEP_F3_4"/>
    <property type="match status" value="1"/>
</dbReference>